<dbReference type="EMBL" id="CR382137">
    <property type="protein sequence ID" value="CAG87756.1"/>
    <property type="molecule type" value="Genomic_DNA"/>
</dbReference>
<dbReference type="RefSeq" id="XP_459529.1">
    <property type="nucleotide sequence ID" value="XM_459529.1"/>
</dbReference>
<dbReference type="FunCoup" id="Q6BQJ1">
    <property type="interactions" value="123"/>
</dbReference>
<dbReference type="STRING" id="284592.Q6BQJ1"/>
<dbReference type="GeneID" id="2901842"/>
<dbReference type="KEGG" id="dha:DEHA2E04840g"/>
<dbReference type="VEuPathDB" id="FungiDB:DEHA2E04840g"/>
<dbReference type="eggNOG" id="KOG3140">
    <property type="taxonomic scope" value="Eukaryota"/>
</dbReference>
<dbReference type="HOGENOM" id="CLU_041954_1_0_1"/>
<dbReference type="InParanoid" id="Q6BQJ1"/>
<dbReference type="OMA" id="KWQALET"/>
<dbReference type="OrthoDB" id="166803at2759"/>
<dbReference type="Proteomes" id="UP000000599">
    <property type="component" value="Chromosome E"/>
</dbReference>
<dbReference type="GO" id="GO:0000139">
    <property type="term" value="C:Golgi membrane"/>
    <property type="evidence" value="ECO:0007669"/>
    <property type="project" value="UniProtKB-SubCell"/>
</dbReference>
<dbReference type="GO" id="GO:0000022">
    <property type="term" value="P:mitotic spindle elongation"/>
    <property type="evidence" value="ECO:0007669"/>
    <property type="project" value="TreeGrafter"/>
</dbReference>
<dbReference type="GO" id="GO:0016192">
    <property type="term" value="P:vesicle-mediated transport"/>
    <property type="evidence" value="ECO:0007669"/>
    <property type="project" value="TreeGrafter"/>
</dbReference>
<dbReference type="InterPro" id="IPR051076">
    <property type="entry name" value="Golgi_membrane_TVP38/TMEM64"/>
</dbReference>
<dbReference type="InterPro" id="IPR032816">
    <property type="entry name" value="VTT_dom"/>
</dbReference>
<dbReference type="PANTHER" id="PTHR47549:SF1">
    <property type="entry name" value="GOLGI APPARATUS MEMBRANE PROTEIN TVP38"/>
    <property type="match status" value="1"/>
</dbReference>
<dbReference type="PANTHER" id="PTHR47549">
    <property type="entry name" value="GOLGI APPARATUS MEMBRANE PROTEIN TVP38-RELATED"/>
    <property type="match status" value="1"/>
</dbReference>
<dbReference type="Pfam" id="PF09335">
    <property type="entry name" value="VTT_dom"/>
    <property type="match status" value="1"/>
</dbReference>
<accession>Q6BQJ1</accession>
<protein>
    <recommendedName>
        <fullName>Golgi apparatus membrane protein TVP38</fullName>
    </recommendedName>
</protein>
<feature type="chain" id="PRO_0000343068" description="Golgi apparatus membrane protein TVP38">
    <location>
        <begin position="1"/>
        <end position="383"/>
    </location>
</feature>
<feature type="topological domain" description="Lumenal" evidence="2">
    <location>
        <begin position="1"/>
        <end position="57"/>
    </location>
</feature>
<feature type="transmembrane region" description="Helical" evidence="2">
    <location>
        <begin position="58"/>
        <end position="78"/>
    </location>
</feature>
<feature type="topological domain" description="Cytoplasmic" evidence="2">
    <location>
        <begin position="79"/>
        <end position="99"/>
    </location>
</feature>
<feature type="transmembrane region" description="Helical" evidence="2">
    <location>
        <begin position="100"/>
        <end position="120"/>
    </location>
</feature>
<feature type="topological domain" description="Lumenal" evidence="2">
    <location>
        <begin position="121"/>
        <end position="133"/>
    </location>
</feature>
<feature type="transmembrane region" description="Helical" evidence="2">
    <location>
        <begin position="134"/>
        <end position="156"/>
    </location>
</feature>
<feature type="topological domain" description="Cytoplasmic" evidence="2">
    <location>
        <begin position="157"/>
        <end position="213"/>
    </location>
</feature>
<feature type="transmembrane region" description="Helical" evidence="2">
    <location>
        <begin position="214"/>
        <end position="233"/>
    </location>
</feature>
<feature type="topological domain" description="Lumenal" evidence="2">
    <location>
        <begin position="234"/>
        <end position="248"/>
    </location>
</feature>
<feature type="transmembrane region" description="Helical" evidence="2">
    <location>
        <begin position="249"/>
        <end position="269"/>
    </location>
</feature>
<feature type="topological domain" description="Cytoplasmic" evidence="2">
    <location>
        <begin position="270"/>
        <end position="383"/>
    </location>
</feature>
<feature type="region of interest" description="Disordered" evidence="3">
    <location>
        <begin position="1"/>
        <end position="22"/>
    </location>
</feature>
<feature type="region of interest" description="VTT domain" evidence="1">
    <location>
        <begin position="125"/>
        <end position="235"/>
    </location>
</feature>
<feature type="region of interest" description="Disordered" evidence="3">
    <location>
        <begin position="345"/>
        <end position="383"/>
    </location>
</feature>
<feature type="compositionally biased region" description="Polar residues" evidence="3">
    <location>
        <begin position="1"/>
        <end position="10"/>
    </location>
</feature>
<feature type="compositionally biased region" description="Acidic residues" evidence="3">
    <location>
        <begin position="353"/>
        <end position="362"/>
    </location>
</feature>
<feature type="compositionally biased region" description="Polar residues" evidence="3">
    <location>
        <begin position="370"/>
        <end position="383"/>
    </location>
</feature>
<sequence>MPRLPSSSDPFQGHNELPQSNNFMSRTNSIIQDKLFLVRNVGQQTLDWYQSQPLWKRTLLQVLFVFNAIVVVLIMIFHKSIIQAIVVISDKWHGLKFGQGLLFTLVFMVGFPPLLGFSALSMLAGMVYGFVHGWILLACASISGSFCSFLVFRYLLHSRAERLMNSNKKFRAFSEILREDSSLFILVLLRLCPLPYSLSNGALAAIPELPATTYFLASLITSPKLMIHIFVGHKLKELGDDTKGKSTHLIDILSIIITGAAASLTTYIIYNKMQRKLEFYHQRGIIPRDDAIIFGNFEDIESANNVELNSADYDEDNFIIEDEDDENATDPDYVASKKNIQVHAEDQNKNGEFEIDENDGVDDLGLGEISKNSKQNTNGYRDY</sequence>
<name>TVP38_DEBHA</name>
<gene>
    <name type="primary">TVP38</name>
    <name type="ordered locus">DEHA2E04840g</name>
</gene>
<proteinExistence type="inferred from homology"/>
<evidence type="ECO:0000250" key="1">
    <source>
        <dbReference type="UniProtKB" id="P36164"/>
    </source>
</evidence>
<evidence type="ECO:0000255" key="2"/>
<evidence type="ECO:0000256" key="3">
    <source>
        <dbReference type="SAM" id="MobiDB-lite"/>
    </source>
</evidence>
<evidence type="ECO:0000305" key="4"/>
<reference key="1">
    <citation type="journal article" date="2004" name="Nature">
        <title>Genome evolution in yeasts.</title>
        <authorList>
            <person name="Dujon B."/>
            <person name="Sherman D."/>
            <person name="Fischer G."/>
            <person name="Durrens P."/>
            <person name="Casaregola S."/>
            <person name="Lafontaine I."/>
            <person name="de Montigny J."/>
            <person name="Marck C."/>
            <person name="Neuveglise C."/>
            <person name="Talla E."/>
            <person name="Goffard N."/>
            <person name="Frangeul L."/>
            <person name="Aigle M."/>
            <person name="Anthouard V."/>
            <person name="Babour A."/>
            <person name="Barbe V."/>
            <person name="Barnay S."/>
            <person name="Blanchin S."/>
            <person name="Beckerich J.-M."/>
            <person name="Beyne E."/>
            <person name="Bleykasten C."/>
            <person name="Boisrame A."/>
            <person name="Boyer J."/>
            <person name="Cattolico L."/>
            <person name="Confanioleri F."/>
            <person name="de Daruvar A."/>
            <person name="Despons L."/>
            <person name="Fabre E."/>
            <person name="Fairhead C."/>
            <person name="Ferry-Dumazet H."/>
            <person name="Groppi A."/>
            <person name="Hantraye F."/>
            <person name="Hennequin C."/>
            <person name="Jauniaux N."/>
            <person name="Joyet P."/>
            <person name="Kachouri R."/>
            <person name="Kerrest A."/>
            <person name="Koszul R."/>
            <person name="Lemaire M."/>
            <person name="Lesur I."/>
            <person name="Ma L."/>
            <person name="Muller H."/>
            <person name="Nicaud J.-M."/>
            <person name="Nikolski M."/>
            <person name="Oztas S."/>
            <person name="Ozier-Kalogeropoulos O."/>
            <person name="Pellenz S."/>
            <person name="Potier S."/>
            <person name="Richard G.-F."/>
            <person name="Straub M.-L."/>
            <person name="Suleau A."/>
            <person name="Swennen D."/>
            <person name="Tekaia F."/>
            <person name="Wesolowski-Louvel M."/>
            <person name="Westhof E."/>
            <person name="Wirth B."/>
            <person name="Zeniou-Meyer M."/>
            <person name="Zivanovic Y."/>
            <person name="Bolotin-Fukuhara M."/>
            <person name="Thierry A."/>
            <person name="Bouchier C."/>
            <person name="Caudron B."/>
            <person name="Scarpelli C."/>
            <person name="Gaillardin C."/>
            <person name="Weissenbach J."/>
            <person name="Wincker P."/>
            <person name="Souciet J.-L."/>
        </authorList>
    </citation>
    <scope>NUCLEOTIDE SEQUENCE [LARGE SCALE GENOMIC DNA]</scope>
    <source>
        <strain>ATCC 36239 / CBS 767 / BCRC 21394 / JCM 1990 / NBRC 0083 / IGC 2968</strain>
    </source>
</reference>
<organism>
    <name type="scientific">Debaryomyces hansenii (strain ATCC 36239 / CBS 767 / BCRC 21394 / JCM 1990 / NBRC 0083 / IGC 2968)</name>
    <name type="common">Yeast</name>
    <name type="synonym">Torulaspora hansenii</name>
    <dbReference type="NCBI Taxonomy" id="284592"/>
    <lineage>
        <taxon>Eukaryota</taxon>
        <taxon>Fungi</taxon>
        <taxon>Dikarya</taxon>
        <taxon>Ascomycota</taxon>
        <taxon>Saccharomycotina</taxon>
        <taxon>Pichiomycetes</taxon>
        <taxon>Debaryomycetaceae</taxon>
        <taxon>Debaryomyces</taxon>
    </lineage>
</organism>
<comment type="function">
    <text>Golgi membrane protein involved in vesicular trafficking and spindle migration.</text>
</comment>
<comment type="subcellular location">
    <subcellularLocation>
        <location>Golgi apparatus membrane</location>
        <topology>Multi-pass membrane protein</topology>
    </subcellularLocation>
</comment>
<comment type="domain">
    <text evidence="1">The VTT domain was previously called the SNARE-assoc domain. As there is no evidence that this domain associates with SNARE proteins, it was renamed as VMP1, TMEM41, and TVP38 (VTT) domain.</text>
</comment>
<comment type="similarity">
    <text evidence="4">Belongs to the TVP38/TMEM64 family.</text>
</comment>
<keyword id="KW-0333">Golgi apparatus</keyword>
<keyword id="KW-0472">Membrane</keyword>
<keyword id="KW-1185">Reference proteome</keyword>
<keyword id="KW-0812">Transmembrane</keyword>
<keyword id="KW-1133">Transmembrane helix</keyword>